<protein>
    <recommendedName>
        <fullName evidence="1">Large ribosomal subunit protein bL36</fullName>
    </recommendedName>
    <alternativeName>
        <fullName evidence="2">50S ribosomal protein L36</fullName>
    </alternativeName>
</protein>
<comment type="similarity">
    <text evidence="1">Belongs to the bacterial ribosomal protein bL36 family.</text>
</comment>
<proteinExistence type="inferred from homology"/>
<name>RL36_KLEP3</name>
<evidence type="ECO:0000255" key="1">
    <source>
        <dbReference type="HAMAP-Rule" id="MF_00251"/>
    </source>
</evidence>
<evidence type="ECO:0000305" key="2"/>
<feature type="chain" id="PRO_1000101034" description="Large ribosomal subunit protein bL36">
    <location>
        <begin position="1"/>
        <end position="46"/>
    </location>
</feature>
<organism>
    <name type="scientific">Klebsiella pneumoniae (strain 342)</name>
    <dbReference type="NCBI Taxonomy" id="507522"/>
    <lineage>
        <taxon>Bacteria</taxon>
        <taxon>Pseudomonadati</taxon>
        <taxon>Pseudomonadota</taxon>
        <taxon>Gammaproteobacteria</taxon>
        <taxon>Enterobacterales</taxon>
        <taxon>Enterobacteriaceae</taxon>
        <taxon>Klebsiella/Raoultella group</taxon>
        <taxon>Klebsiella</taxon>
        <taxon>Klebsiella pneumoniae complex</taxon>
    </lineage>
</organism>
<dbReference type="EMBL" id="CP000964">
    <property type="protein sequence ID" value="ACI11365.1"/>
    <property type="molecule type" value="Genomic_DNA"/>
</dbReference>
<dbReference type="SMR" id="B5Y0Q3"/>
<dbReference type="KEGG" id="kpe:KPK_4243"/>
<dbReference type="HOGENOM" id="CLU_135723_3_1_6"/>
<dbReference type="Proteomes" id="UP000001734">
    <property type="component" value="Chromosome"/>
</dbReference>
<dbReference type="GO" id="GO:1990904">
    <property type="term" value="C:ribonucleoprotein complex"/>
    <property type="evidence" value="ECO:0007669"/>
    <property type="project" value="UniProtKB-KW"/>
</dbReference>
<dbReference type="GO" id="GO:0005840">
    <property type="term" value="C:ribosome"/>
    <property type="evidence" value="ECO:0007669"/>
    <property type="project" value="UniProtKB-KW"/>
</dbReference>
<dbReference type="GO" id="GO:0003735">
    <property type="term" value="F:structural constituent of ribosome"/>
    <property type="evidence" value="ECO:0007669"/>
    <property type="project" value="InterPro"/>
</dbReference>
<dbReference type="GO" id="GO:0006412">
    <property type="term" value="P:translation"/>
    <property type="evidence" value="ECO:0007669"/>
    <property type="project" value="UniProtKB-UniRule"/>
</dbReference>
<dbReference type="HAMAP" id="MF_00251">
    <property type="entry name" value="Ribosomal_bL36"/>
    <property type="match status" value="1"/>
</dbReference>
<dbReference type="InterPro" id="IPR000473">
    <property type="entry name" value="Ribosomal_bL36"/>
</dbReference>
<dbReference type="InterPro" id="IPR035977">
    <property type="entry name" value="Ribosomal_bL36_sp"/>
</dbReference>
<dbReference type="InterPro" id="IPR047621">
    <property type="entry name" value="Ribosomal_L36_bact"/>
</dbReference>
<dbReference type="NCBIfam" id="NF002021">
    <property type="entry name" value="PRK00831.1"/>
    <property type="match status" value="1"/>
</dbReference>
<dbReference type="NCBIfam" id="TIGR01022">
    <property type="entry name" value="rpmJ_bact"/>
    <property type="match status" value="1"/>
</dbReference>
<dbReference type="PANTHER" id="PTHR47781">
    <property type="entry name" value="50S RIBOSOMAL PROTEIN L36 2"/>
    <property type="match status" value="1"/>
</dbReference>
<dbReference type="PANTHER" id="PTHR47781:SF1">
    <property type="entry name" value="LARGE RIBOSOMAL SUBUNIT PROTEIN BL36B"/>
    <property type="match status" value="1"/>
</dbReference>
<dbReference type="Pfam" id="PF00444">
    <property type="entry name" value="Ribosomal_L36"/>
    <property type="match status" value="1"/>
</dbReference>
<dbReference type="SUPFAM" id="SSF57840">
    <property type="entry name" value="Ribosomal protein L36"/>
    <property type="match status" value="1"/>
</dbReference>
<dbReference type="PROSITE" id="PS00828">
    <property type="entry name" value="RIBOSOMAL_L36"/>
    <property type="match status" value="1"/>
</dbReference>
<gene>
    <name evidence="1" type="primary">rpmJ</name>
    <name type="ordered locus">KPK_4243</name>
</gene>
<accession>B5Y0Q3</accession>
<reference key="1">
    <citation type="journal article" date="2008" name="PLoS Genet.">
        <title>Complete genome sequence of the N2-fixing broad host range endophyte Klebsiella pneumoniae 342 and virulence predictions verified in mice.</title>
        <authorList>
            <person name="Fouts D.E."/>
            <person name="Tyler H.L."/>
            <person name="DeBoy R.T."/>
            <person name="Daugherty S."/>
            <person name="Ren Q."/>
            <person name="Badger J.H."/>
            <person name="Durkin A.S."/>
            <person name="Huot H."/>
            <person name="Shrivastava S."/>
            <person name="Kothari S."/>
            <person name="Dodson R.J."/>
            <person name="Mohamoud Y."/>
            <person name="Khouri H."/>
            <person name="Roesch L.F.W."/>
            <person name="Krogfelt K.A."/>
            <person name="Struve C."/>
            <person name="Triplett E.W."/>
            <person name="Methe B.A."/>
        </authorList>
    </citation>
    <scope>NUCLEOTIDE SEQUENCE [LARGE SCALE GENOMIC DNA]</scope>
    <source>
        <strain>342</strain>
    </source>
</reference>
<keyword id="KW-0687">Ribonucleoprotein</keyword>
<keyword id="KW-0689">Ribosomal protein</keyword>
<sequence>MQVVNSLRSAKQRHPDCQLVKRKGRLYVICKSNPRFKAVQGRKKRR</sequence>